<proteinExistence type="inferred from homology"/>
<name>THIG_AGRFC</name>
<sequence>MLTLYGREVSSRLLLGTARYPSPAVLADAVRASNTDILTISLRREMAGAKKGGQFFELIRELDRHILPNTAGCHTAKEAVLTAKMAREVFRTDWIKLEVIGHHDTLQPDVFALVEAAKILCDEGFEVFPYTTDDLVVAEKLLEAGCRVLMPWCAPIGSAMGPLNLTALKSMRARFPEVPLIVDAGIGRPSHAVTVMELGYDAVLLNTAVAGAGDPVGMAEAFARAIEAGHQAYLSGPLEPRDMAVPSTPVIGTAVFS</sequence>
<organism>
    <name type="scientific">Agrobacterium fabrum (strain C58 / ATCC 33970)</name>
    <name type="common">Agrobacterium tumefaciens (strain C58)</name>
    <dbReference type="NCBI Taxonomy" id="176299"/>
    <lineage>
        <taxon>Bacteria</taxon>
        <taxon>Pseudomonadati</taxon>
        <taxon>Pseudomonadota</taxon>
        <taxon>Alphaproteobacteria</taxon>
        <taxon>Hyphomicrobiales</taxon>
        <taxon>Rhizobiaceae</taxon>
        <taxon>Rhizobium/Agrobacterium group</taxon>
        <taxon>Agrobacterium</taxon>
        <taxon>Agrobacterium tumefaciens complex</taxon>
    </lineage>
</organism>
<gene>
    <name evidence="1" type="primary">thiG</name>
    <name type="ordered locus">Atu2566</name>
    <name type="ORF">AGR_C_4650</name>
</gene>
<comment type="function">
    <text evidence="1">Catalyzes the rearrangement of 1-deoxy-D-xylulose 5-phosphate (DXP) to produce the thiazole phosphate moiety of thiamine. Sulfur is provided by the thiocarboxylate moiety of the carrier protein ThiS. In vitro, sulfur can be provided by H(2)S.</text>
</comment>
<comment type="catalytic activity">
    <reaction evidence="1">
        <text>[ThiS sulfur-carrier protein]-C-terminal-Gly-aminoethanethioate + 2-iminoacetate + 1-deoxy-D-xylulose 5-phosphate = [ThiS sulfur-carrier protein]-C-terminal Gly-Gly + 2-[(2R,5Z)-2-carboxy-4-methylthiazol-5(2H)-ylidene]ethyl phosphate + 2 H2O + H(+)</text>
        <dbReference type="Rhea" id="RHEA:26297"/>
        <dbReference type="Rhea" id="RHEA-COMP:12909"/>
        <dbReference type="Rhea" id="RHEA-COMP:19908"/>
        <dbReference type="ChEBI" id="CHEBI:15377"/>
        <dbReference type="ChEBI" id="CHEBI:15378"/>
        <dbReference type="ChEBI" id="CHEBI:57792"/>
        <dbReference type="ChEBI" id="CHEBI:62899"/>
        <dbReference type="ChEBI" id="CHEBI:77846"/>
        <dbReference type="ChEBI" id="CHEBI:90778"/>
        <dbReference type="ChEBI" id="CHEBI:232372"/>
        <dbReference type="EC" id="2.8.1.10"/>
    </reaction>
</comment>
<comment type="pathway">
    <text evidence="1">Cofactor biosynthesis; thiamine diphosphate biosynthesis.</text>
</comment>
<comment type="subunit">
    <text evidence="1">Homotetramer. Forms heterodimers with either ThiH or ThiS.</text>
</comment>
<comment type="subcellular location">
    <subcellularLocation>
        <location evidence="1">Cytoplasm</location>
    </subcellularLocation>
</comment>
<comment type="similarity">
    <text evidence="1">Belongs to the ThiG family.</text>
</comment>
<dbReference type="EC" id="2.8.1.10" evidence="1"/>
<dbReference type="EMBL" id="AE007869">
    <property type="protein sequence ID" value="AAK88290.1"/>
    <property type="molecule type" value="Genomic_DNA"/>
</dbReference>
<dbReference type="PIR" id="A97667">
    <property type="entry name" value="A97667"/>
</dbReference>
<dbReference type="PIR" id="AE2891">
    <property type="entry name" value="AE2891"/>
</dbReference>
<dbReference type="RefSeq" id="NP_355505.1">
    <property type="nucleotide sequence ID" value="NC_003062.2"/>
</dbReference>
<dbReference type="RefSeq" id="WP_010972406.1">
    <property type="nucleotide sequence ID" value="NC_003062.2"/>
</dbReference>
<dbReference type="SMR" id="Q8UCD2"/>
<dbReference type="STRING" id="176299.Atu2566"/>
<dbReference type="EnsemblBacteria" id="AAK88290">
    <property type="protein sequence ID" value="AAK88290"/>
    <property type="gene ID" value="Atu2566"/>
</dbReference>
<dbReference type="GeneID" id="1134604"/>
<dbReference type="KEGG" id="atu:Atu2566"/>
<dbReference type="PATRIC" id="fig|176299.10.peg.2570"/>
<dbReference type="eggNOG" id="COG2022">
    <property type="taxonomic scope" value="Bacteria"/>
</dbReference>
<dbReference type="HOGENOM" id="CLU_062233_1_0_5"/>
<dbReference type="OrthoDB" id="9805935at2"/>
<dbReference type="PhylomeDB" id="Q8UCD2"/>
<dbReference type="BioCyc" id="AGRO:ATU2566-MONOMER"/>
<dbReference type="UniPathway" id="UPA00060"/>
<dbReference type="Proteomes" id="UP000000813">
    <property type="component" value="Chromosome circular"/>
</dbReference>
<dbReference type="GO" id="GO:0005737">
    <property type="term" value="C:cytoplasm"/>
    <property type="evidence" value="ECO:0007669"/>
    <property type="project" value="UniProtKB-SubCell"/>
</dbReference>
<dbReference type="GO" id="GO:1990107">
    <property type="term" value="F:thiazole synthase activity"/>
    <property type="evidence" value="ECO:0007669"/>
    <property type="project" value="UniProtKB-EC"/>
</dbReference>
<dbReference type="GO" id="GO:0009229">
    <property type="term" value="P:thiamine diphosphate biosynthetic process"/>
    <property type="evidence" value="ECO:0007669"/>
    <property type="project" value="UniProtKB-UniRule"/>
</dbReference>
<dbReference type="CDD" id="cd04728">
    <property type="entry name" value="ThiG"/>
    <property type="match status" value="1"/>
</dbReference>
<dbReference type="Gene3D" id="3.20.20.70">
    <property type="entry name" value="Aldolase class I"/>
    <property type="match status" value="1"/>
</dbReference>
<dbReference type="HAMAP" id="MF_00443">
    <property type="entry name" value="ThiG"/>
    <property type="match status" value="1"/>
</dbReference>
<dbReference type="InterPro" id="IPR013785">
    <property type="entry name" value="Aldolase_TIM"/>
</dbReference>
<dbReference type="InterPro" id="IPR033983">
    <property type="entry name" value="Thiazole_synthase_ThiG"/>
</dbReference>
<dbReference type="InterPro" id="IPR008867">
    <property type="entry name" value="ThiG"/>
</dbReference>
<dbReference type="PANTHER" id="PTHR34266">
    <property type="entry name" value="THIAZOLE SYNTHASE"/>
    <property type="match status" value="1"/>
</dbReference>
<dbReference type="PANTHER" id="PTHR34266:SF2">
    <property type="entry name" value="THIAZOLE SYNTHASE"/>
    <property type="match status" value="1"/>
</dbReference>
<dbReference type="Pfam" id="PF05690">
    <property type="entry name" value="ThiG"/>
    <property type="match status" value="1"/>
</dbReference>
<dbReference type="SUPFAM" id="SSF110399">
    <property type="entry name" value="ThiG-like"/>
    <property type="match status" value="1"/>
</dbReference>
<accession>Q8UCD2</accession>
<feature type="chain" id="PRO_0000162775" description="Thiazole synthase">
    <location>
        <begin position="1"/>
        <end position="257"/>
    </location>
</feature>
<feature type="active site" description="Schiff-base intermediate with DXP" evidence="1">
    <location>
        <position position="96"/>
    </location>
</feature>
<feature type="binding site" evidence="1">
    <location>
        <position position="157"/>
    </location>
    <ligand>
        <name>1-deoxy-D-xylulose 5-phosphate</name>
        <dbReference type="ChEBI" id="CHEBI:57792"/>
    </ligand>
</feature>
<feature type="binding site" evidence="1">
    <location>
        <begin position="184"/>
        <end position="185"/>
    </location>
    <ligand>
        <name>1-deoxy-D-xylulose 5-phosphate</name>
        <dbReference type="ChEBI" id="CHEBI:57792"/>
    </ligand>
</feature>
<feature type="binding site" evidence="1">
    <location>
        <begin position="206"/>
        <end position="207"/>
    </location>
    <ligand>
        <name>1-deoxy-D-xylulose 5-phosphate</name>
        <dbReference type="ChEBI" id="CHEBI:57792"/>
    </ligand>
</feature>
<reference key="1">
    <citation type="journal article" date="2001" name="Science">
        <title>The genome of the natural genetic engineer Agrobacterium tumefaciens C58.</title>
        <authorList>
            <person name="Wood D.W."/>
            <person name="Setubal J.C."/>
            <person name="Kaul R."/>
            <person name="Monks D.E."/>
            <person name="Kitajima J.P."/>
            <person name="Okura V.K."/>
            <person name="Zhou Y."/>
            <person name="Chen L."/>
            <person name="Wood G.E."/>
            <person name="Almeida N.F. Jr."/>
            <person name="Woo L."/>
            <person name="Chen Y."/>
            <person name="Paulsen I.T."/>
            <person name="Eisen J.A."/>
            <person name="Karp P.D."/>
            <person name="Bovee D. Sr."/>
            <person name="Chapman P."/>
            <person name="Clendenning J."/>
            <person name="Deatherage G."/>
            <person name="Gillet W."/>
            <person name="Grant C."/>
            <person name="Kutyavin T."/>
            <person name="Levy R."/>
            <person name="Li M.-J."/>
            <person name="McClelland E."/>
            <person name="Palmieri A."/>
            <person name="Raymond C."/>
            <person name="Rouse G."/>
            <person name="Saenphimmachak C."/>
            <person name="Wu Z."/>
            <person name="Romero P."/>
            <person name="Gordon D."/>
            <person name="Zhang S."/>
            <person name="Yoo H."/>
            <person name="Tao Y."/>
            <person name="Biddle P."/>
            <person name="Jung M."/>
            <person name="Krespan W."/>
            <person name="Perry M."/>
            <person name="Gordon-Kamm B."/>
            <person name="Liao L."/>
            <person name="Kim S."/>
            <person name="Hendrick C."/>
            <person name="Zhao Z.-Y."/>
            <person name="Dolan M."/>
            <person name="Chumley F."/>
            <person name="Tingey S.V."/>
            <person name="Tomb J.-F."/>
            <person name="Gordon M.P."/>
            <person name="Olson M.V."/>
            <person name="Nester E.W."/>
        </authorList>
    </citation>
    <scope>NUCLEOTIDE SEQUENCE [LARGE SCALE GENOMIC DNA]</scope>
    <source>
        <strain>C58 / ATCC 33970</strain>
    </source>
</reference>
<reference key="2">
    <citation type="journal article" date="2001" name="Science">
        <title>Genome sequence of the plant pathogen and biotechnology agent Agrobacterium tumefaciens C58.</title>
        <authorList>
            <person name="Goodner B."/>
            <person name="Hinkle G."/>
            <person name="Gattung S."/>
            <person name="Miller N."/>
            <person name="Blanchard M."/>
            <person name="Qurollo B."/>
            <person name="Goldman B.S."/>
            <person name="Cao Y."/>
            <person name="Askenazi M."/>
            <person name="Halling C."/>
            <person name="Mullin L."/>
            <person name="Houmiel K."/>
            <person name="Gordon J."/>
            <person name="Vaudin M."/>
            <person name="Iartchouk O."/>
            <person name="Epp A."/>
            <person name="Liu F."/>
            <person name="Wollam C."/>
            <person name="Allinger M."/>
            <person name="Doughty D."/>
            <person name="Scott C."/>
            <person name="Lappas C."/>
            <person name="Markelz B."/>
            <person name="Flanagan C."/>
            <person name="Crowell C."/>
            <person name="Gurson J."/>
            <person name="Lomo C."/>
            <person name="Sear C."/>
            <person name="Strub G."/>
            <person name="Cielo C."/>
            <person name="Slater S."/>
        </authorList>
    </citation>
    <scope>NUCLEOTIDE SEQUENCE [LARGE SCALE GENOMIC DNA]</scope>
    <source>
        <strain>C58 / ATCC 33970</strain>
    </source>
</reference>
<protein>
    <recommendedName>
        <fullName evidence="1">Thiazole synthase</fullName>
        <ecNumber evidence="1">2.8.1.10</ecNumber>
    </recommendedName>
</protein>
<keyword id="KW-0963">Cytoplasm</keyword>
<keyword id="KW-1185">Reference proteome</keyword>
<keyword id="KW-0704">Schiff base</keyword>
<keyword id="KW-0784">Thiamine biosynthesis</keyword>
<keyword id="KW-0808">Transferase</keyword>
<evidence type="ECO:0000255" key="1">
    <source>
        <dbReference type="HAMAP-Rule" id="MF_00443"/>
    </source>
</evidence>